<keyword id="KW-0002">3D-structure</keyword>
<keyword id="KW-0007">Acetylation</keyword>
<keyword id="KW-0025">Alternative splicing</keyword>
<keyword id="KW-0963">Cytoplasm</keyword>
<keyword id="KW-0343">GTPase activation</keyword>
<keyword id="KW-0551">Lipid droplet</keyword>
<keyword id="KW-0472">Membrane</keyword>
<keyword id="KW-0496">Mitochondrion</keyword>
<keyword id="KW-0597">Phosphoprotein</keyword>
<keyword id="KW-1267">Proteomics identification</keyword>
<keyword id="KW-1185">Reference proteome</keyword>
<keyword id="KW-0043">Tumor suppressor</keyword>
<protein>
    <recommendedName>
        <fullName>StAR-related lipid transfer protein 13</fullName>
    </recommendedName>
    <alternativeName>
        <fullName>46H23.2</fullName>
    </alternativeName>
    <alternativeName>
        <fullName>Deleted in liver cancer 2 protein</fullName>
        <shortName>DLC-2</shortName>
    </alternativeName>
    <alternativeName>
        <fullName>Rho GTPase-activating protein</fullName>
    </alternativeName>
    <alternativeName>
        <fullName>START domain-containing protein 13</fullName>
        <shortName>StARD13</shortName>
    </alternativeName>
</protein>
<feature type="chain" id="PRO_0000220679" description="StAR-related lipid transfer protein 13">
    <location>
        <begin position="1"/>
        <end position="1113"/>
    </location>
</feature>
<feature type="domain" description="SAM">
    <location>
        <begin position="55"/>
        <end position="122"/>
    </location>
</feature>
<feature type="domain" description="Rho-GAP" evidence="2">
    <location>
        <begin position="663"/>
        <end position="868"/>
    </location>
</feature>
<feature type="domain" description="START" evidence="3">
    <location>
        <begin position="899"/>
        <end position="1107"/>
    </location>
</feature>
<feature type="region of interest" description="Disordered" evidence="4">
    <location>
        <begin position="162"/>
        <end position="254"/>
    </location>
</feature>
<feature type="region of interest" description="Disordered" evidence="4">
    <location>
        <begin position="307"/>
        <end position="346"/>
    </location>
</feature>
<feature type="region of interest" description="Disordered" evidence="4">
    <location>
        <begin position="536"/>
        <end position="580"/>
    </location>
</feature>
<feature type="compositionally biased region" description="Polar residues" evidence="4">
    <location>
        <begin position="177"/>
        <end position="188"/>
    </location>
</feature>
<feature type="compositionally biased region" description="Low complexity" evidence="4">
    <location>
        <begin position="197"/>
        <end position="213"/>
    </location>
</feature>
<feature type="compositionally biased region" description="Low complexity" evidence="4">
    <location>
        <begin position="326"/>
        <end position="344"/>
    </location>
</feature>
<feature type="compositionally biased region" description="Polar residues" evidence="4">
    <location>
        <begin position="536"/>
        <end position="549"/>
    </location>
</feature>
<feature type="site" description="Arginine finger; crucial for GTP hydrolysis by stabilizing the transition state" evidence="2">
    <location>
        <position position="699"/>
    </location>
</feature>
<feature type="modified residue" description="N-acetylmethionine" evidence="14">
    <location>
        <position position="1"/>
    </location>
</feature>
<feature type="modified residue" description="Phosphoserine" evidence="1">
    <location>
        <position position="411"/>
    </location>
</feature>
<feature type="splice variant" id="VSP_017353" description="In isoform 3." evidence="10 12">
    <location>
        <begin position="1"/>
        <end position="118"/>
    </location>
</feature>
<feature type="splice variant" id="VSP_017354" description="In isoform 2 and isoform 5." evidence="9 10">
    <original>MFSQVPRTPASGCYYLNSMTPEGQEMYLRFDQTTRRSPYRMSRILARHQLVTKIQQ</original>
    <variation>MLEPSSVLHANVNQAPLWCLVLRWCRECKDTVCGGKQKSRVNHTFQRR</variation>
    <location>
        <begin position="1"/>
        <end position="56"/>
    </location>
</feature>
<feature type="splice variant" id="VSP_017355" description="In isoform 4." evidence="11">
    <original>MFSQVPRTPASGCYYLNSMTPEGQEMYLRFDQTTRRSPYRMSRILARHQLVTKIQQ</original>
    <variation>MSTGTQPKTKVLSDKRPKERV</variation>
    <location>
        <begin position="1"/>
        <end position="56"/>
    </location>
</feature>
<feature type="splice variant" id="VSP_017356" description="In isoform 5." evidence="9">
    <original>V</original>
    <variation>E</variation>
    <location>
        <position position="695"/>
    </location>
</feature>
<feature type="splice variant" id="VSP_017357" description="In isoform 5." evidence="9">
    <location>
        <begin position="696"/>
        <end position="1113"/>
    </location>
</feature>
<feature type="sequence variant" id="VAR_037494" description="In dbSNP:rs9568878.">
    <original>T</original>
    <variation>M</variation>
    <location>
        <position position="175"/>
    </location>
</feature>
<feature type="sequence variant" id="VAR_022098" description="In dbSNP:rs3742321.">
    <original>K</original>
    <variation>R</variation>
    <location>
        <position position="250"/>
    </location>
</feature>
<feature type="sequence variant" id="VAR_037495" description="In dbSNP:rs34425674.">
    <original>R</original>
    <variation>P</variation>
    <location>
        <position position="383"/>
    </location>
</feature>
<feature type="sequence variant" id="VAR_037496" description="In dbSNP:rs35144435.">
    <original>N</original>
    <variation>S</variation>
    <location>
        <position position="798"/>
    </location>
</feature>
<feature type="mutagenesis site" description="Loss of RhoGAP activity." evidence="5">
    <original>R</original>
    <variation>A</variation>
    <location>
        <position position="699"/>
    </location>
</feature>
<feature type="mutagenesis site" description="Loss of RhoGAP activity." evidence="7">
    <original>K</original>
    <variation>E</variation>
    <location>
        <position position="736"/>
    </location>
</feature>
<feature type="mutagenesis site" description="Loss of RhoGAP activity." evidence="7">
    <original>R</original>
    <variation>E</variation>
    <location>
        <position position="740"/>
    </location>
</feature>
<feature type="sequence conflict" description="In Ref. 2; AAQ72791." evidence="13" ref="2">
    <original>K</original>
    <variation>R</variation>
    <location>
        <position position="143"/>
    </location>
</feature>
<feature type="sequence conflict" description="In Ref. 2; AAQ72791." evidence="13" ref="2">
    <original>I</original>
    <variation>V</variation>
    <location>
        <position position="397"/>
    </location>
</feature>
<feature type="sequence conflict" description="In Ref. 2; AAQ72791." evidence="13" ref="2">
    <original>I</original>
    <variation>T</variation>
    <location>
        <position position="1097"/>
    </location>
</feature>
<feature type="helix" evidence="15">
    <location>
        <begin position="56"/>
        <end position="69"/>
    </location>
</feature>
<feature type="helix" evidence="15">
    <location>
        <begin position="73"/>
        <end position="77"/>
    </location>
</feature>
<feature type="turn" evidence="15">
    <location>
        <begin position="78"/>
        <end position="82"/>
    </location>
</feature>
<feature type="helix" evidence="15">
    <location>
        <begin position="88"/>
        <end position="92"/>
    </location>
</feature>
<feature type="helix" evidence="16">
    <location>
        <begin position="100"/>
        <end position="102"/>
    </location>
</feature>
<feature type="helix" evidence="15">
    <location>
        <begin position="103"/>
        <end position="117"/>
    </location>
</feature>
<feature type="helix" evidence="17">
    <location>
        <begin position="913"/>
        <end position="924"/>
    </location>
</feature>
<feature type="strand" evidence="17">
    <location>
        <begin position="929"/>
        <end position="931"/>
    </location>
</feature>
<feature type="strand" evidence="17">
    <location>
        <begin position="934"/>
        <end position="936"/>
    </location>
</feature>
<feature type="strand" evidence="17">
    <location>
        <begin position="938"/>
        <end position="942"/>
    </location>
</feature>
<feature type="strand" evidence="17">
    <location>
        <begin position="952"/>
        <end position="961"/>
    </location>
</feature>
<feature type="helix" evidence="17">
    <location>
        <begin position="963"/>
        <end position="972"/>
    </location>
</feature>
<feature type="helix" evidence="17">
    <location>
        <begin position="974"/>
        <end position="976"/>
    </location>
</feature>
<feature type="strand" evidence="17">
    <location>
        <begin position="985"/>
        <end position="991"/>
    </location>
</feature>
<feature type="strand" evidence="17">
    <location>
        <begin position="994"/>
        <end position="1001"/>
    </location>
</feature>
<feature type="strand" evidence="17">
    <location>
        <begin position="1004"/>
        <end position="1006"/>
    </location>
</feature>
<feature type="strand" evidence="17">
    <location>
        <begin position="1010"/>
        <end position="1020"/>
    </location>
</feature>
<feature type="helix" evidence="17">
    <location>
        <begin position="1023"/>
        <end position="1025"/>
    </location>
</feature>
<feature type="strand" evidence="17">
    <location>
        <begin position="1027"/>
        <end position="1033"/>
    </location>
</feature>
<feature type="strand" evidence="17">
    <location>
        <begin position="1043"/>
        <end position="1046"/>
    </location>
</feature>
<feature type="strand" evidence="17">
    <location>
        <begin position="1049"/>
        <end position="1058"/>
    </location>
</feature>
<feature type="strand" evidence="17">
    <location>
        <begin position="1064"/>
        <end position="1072"/>
    </location>
</feature>
<feature type="strand" evidence="17">
    <location>
        <begin position="1075"/>
        <end position="1077"/>
    </location>
</feature>
<feature type="turn" evidence="17">
    <location>
        <begin position="1079"/>
        <end position="1084"/>
    </location>
</feature>
<feature type="helix" evidence="17">
    <location>
        <begin position="1085"/>
        <end position="1099"/>
    </location>
</feature>
<proteinExistence type="evidence at protein level"/>
<dbReference type="EMBL" id="AY082589">
    <property type="protein sequence ID" value="AAL91648.1"/>
    <property type="molecule type" value="mRNA"/>
</dbReference>
<dbReference type="EMBL" id="AY366448">
    <property type="protein sequence ID" value="AAQ72791.1"/>
    <property type="molecule type" value="mRNA"/>
</dbReference>
<dbReference type="EMBL" id="AY082590">
    <property type="protein sequence ID" value="AAL91649.1"/>
    <property type="molecule type" value="mRNA"/>
</dbReference>
<dbReference type="EMBL" id="AY082591">
    <property type="protein sequence ID" value="AAL91650.1"/>
    <property type="molecule type" value="mRNA"/>
</dbReference>
<dbReference type="EMBL" id="AL049801">
    <property type="protein sequence ID" value="CAB42562.1"/>
    <property type="molecule type" value="mRNA"/>
</dbReference>
<dbReference type="EMBL" id="BX647695">
    <property type="protein sequence ID" value="CAI46026.1"/>
    <property type="molecule type" value="mRNA"/>
</dbReference>
<dbReference type="EMBL" id="Z84483">
    <property type="protein sequence ID" value="CAC94774.1"/>
    <property type="molecule type" value="Genomic_DNA"/>
</dbReference>
<dbReference type="EMBL" id="AL139187">
    <property type="status" value="NOT_ANNOTATED_CDS"/>
    <property type="molecule type" value="Genomic_DNA"/>
</dbReference>
<dbReference type="EMBL" id="AL627232">
    <property type="status" value="NOT_ANNOTATED_CDS"/>
    <property type="molecule type" value="Genomic_DNA"/>
</dbReference>
<dbReference type="EMBL" id="BC046563">
    <property type="protein sequence ID" value="AAH46563.1"/>
    <property type="molecule type" value="mRNA"/>
</dbReference>
<dbReference type="CCDS" id="CCDS9348.1">
    <molecule id="Q9Y3M8-1"/>
</dbReference>
<dbReference type="CCDS" id="CCDS9349.1">
    <molecule id="Q9Y3M8-2"/>
</dbReference>
<dbReference type="CCDS" id="CCDS9350.1">
    <molecule id="Q9Y3M8-3"/>
</dbReference>
<dbReference type="PIR" id="H59432">
    <property type="entry name" value="H59432"/>
</dbReference>
<dbReference type="RefSeq" id="NP_001230395.1">
    <molecule id="Q9Y3M8-5"/>
    <property type="nucleotide sequence ID" value="NM_001243466.2"/>
</dbReference>
<dbReference type="RefSeq" id="NP_001230403.1">
    <property type="nucleotide sequence ID" value="NM_001243474.1"/>
</dbReference>
<dbReference type="RefSeq" id="NP_001230405.1">
    <property type="nucleotide sequence ID" value="NM_001243476.2"/>
</dbReference>
<dbReference type="RefSeq" id="NP_443083.1">
    <molecule id="Q9Y3M8-3"/>
    <property type="nucleotide sequence ID" value="NM_052851.3"/>
</dbReference>
<dbReference type="RefSeq" id="NP_821074.1">
    <molecule id="Q9Y3M8-1"/>
    <property type="nucleotide sequence ID" value="NM_178006.4"/>
</dbReference>
<dbReference type="RefSeq" id="NP_821075.1">
    <molecule id="Q9Y3M8-2"/>
    <property type="nucleotide sequence ID" value="NM_178007.3"/>
</dbReference>
<dbReference type="RefSeq" id="XP_054231133.1">
    <molecule id="Q9Y3M8-4"/>
    <property type="nucleotide sequence ID" value="XM_054375158.1"/>
</dbReference>
<dbReference type="RefSeq" id="XP_054231134.1">
    <molecule id="Q9Y3M8-4"/>
    <property type="nucleotide sequence ID" value="XM_054375159.1"/>
</dbReference>
<dbReference type="PDB" id="2H80">
    <property type="method" value="NMR"/>
    <property type="chains" value="A=56-120"/>
</dbReference>
<dbReference type="PDB" id="2JW2">
    <property type="method" value="NMR"/>
    <property type="chains" value="A=56-120"/>
</dbReference>
<dbReference type="PDB" id="2PSO">
    <property type="method" value="X-ray"/>
    <property type="resolution" value="2.80 A"/>
    <property type="chains" value="A/B/C=903-1113"/>
</dbReference>
<dbReference type="PDBsum" id="2H80"/>
<dbReference type="PDBsum" id="2JW2"/>
<dbReference type="PDBsum" id="2PSO"/>
<dbReference type="SMR" id="Q9Y3M8"/>
<dbReference type="BioGRID" id="124744">
    <property type="interactions" value="47"/>
</dbReference>
<dbReference type="FunCoup" id="Q9Y3M8">
    <property type="interactions" value="901"/>
</dbReference>
<dbReference type="IntAct" id="Q9Y3M8">
    <property type="interactions" value="15"/>
</dbReference>
<dbReference type="MINT" id="Q9Y3M8"/>
<dbReference type="STRING" id="9606.ENSP00000338785"/>
<dbReference type="GlyGen" id="Q9Y3M8">
    <property type="glycosylation" value="3 sites, 1 N-linked glycan (1 site), 1 O-linked glycan (2 sites)"/>
</dbReference>
<dbReference type="iPTMnet" id="Q9Y3M8"/>
<dbReference type="PhosphoSitePlus" id="Q9Y3M8"/>
<dbReference type="BioMuta" id="STARD13"/>
<dbReference type="DMDM" id="90185285"/>
<dbReference type="jPOST" id="Q9Y3M8"/>
<dbReference type="MassIVE" id="Q9Y3M8"/>
<dbReference type="PaxDb" id="9606-ENSP00000338785"/>
<dbReference type="PeptideAtlas" id="Q9Y3M8"/>
<dbReference type="ProteomicsDB" id="86045">
    <molecule id="Q9Y3M8-1"/>
</dbReference>
<dbReference type="ProteomicsDB" id="86046">
    <molecule id="Q9Y3M8-2"/>
</dbReference>
<dbReference type="ProteomicsDB" id="86047">
    <molecule id="Q9Y3M8-3"/>
</dbReference>
<dbReference type="ProteomicsDB" id="86048">
    <molecule id="Q9Y3M8-4"/>
</dbReference>
<dbReference type="ProteomicsDB" id="86049">
    <molecule id="Q9Y3M8-5"/>
</dbReference>
<dbReference type="Pumba" id="Q9Y3M8"/>
<dbReference type="Antibodypedia" id="35333">
    <property type="antibodies" value="111 antibodies from 25 providers"/>
</dbReference>
<dbReference type="DNASU" id="90627"/>
<dbReference type="Ensembl" id="ENST00000255486.8">
    <molecule id="Q9Y3M8-2"/>
    <property type="protein sequence ID" value="ENSP00000255486.4"/>
    <property type="gene ID" value="ENSG00000133121.21"/>
</dbReference>
<dbReference type="Ensembl" id="ENST00000336934.10">
    <molecule id="Q9Y3M8-1"/>
    <property type="protein sequence ID" value="ENSP00000338785.4"/>
    <property type="gene ID" value="ENSG00000133121.21"/>
</dbReference>
<dbReference type="Ensembl" id="ENST00000399365.7">
    <molecule id="Q9Y3M8-3"/>
    <property type="protein sequence ID" value="ENSP00000382300.3"/>
    <property type="gene ID" value="ENSG00000133121.21"/>
</dbReference>
<dbReference type="GeneID" id="90627"/>
<dbReference type="KEGG" id="hsa:90627"/>
<dbReference type="MANE-Select" id="ENST00000336934.10">
    <property type="protein sequence ID" value="ENSP00000338785.4"/>
    <property type="RefSeq nucleotide sequence ID" value="NM_178006.4"/>
    <property type="RefSeq protein sequence ID" value="NP_821074.1"/>
</dbReference>
<dbReference type="UCSC" id="uc001uuu.4">
    <molecule id="Q9Y3M8-1"/>
    <property type="organism name" value="human"/>
</dbReference>
<dbReference type="AGR" id="HGNC:19164"/>
<dbReference type="CTD" id="90627"/>
<dbReference type="DisGeNET" id="90627"/>
<dbReference type="GeneCards" id="STARD13"/>
<dbReference type="HGNC" id="HGNC:19164">
    <property type="gene designation" value="STARD13"/>
</dbReference>
<dbReference type="HPA" id="ENSG00000133121">
    <property type="expression patterns" value="Low tissue specificity"/>
</dbReference>
<dbReference type="MIM" id="609866">
    <property type="type" value="gene"/>
</dbReference>
<dbReference type="neXtProt" id="NX_Q9Y3M8"/>
<dbReference type="OpenTargets" id="ENSG00000133121"/>
<dbReference type="PharmGKB" id="PA38806"/>
<dbReference type="VEuPathDB" id="HostDB:ENSG00000133121"/>
<dbReference type="eggNOG" id="KOG2200">
    <property type="taxonomic scope" value="Eukaryota"/>
</dbReference>
<dbReference type="GeneTree" id="ENSGT00950000183061"/>
<dbReference type="HOGENOM" id="CLU_004367_0_0_1"/>
<dbReference type="InParanoid" id="Q9Y3M8"/>
<dbReference type="OMA" id="CVNAMST"/>
<dbReference type="OrthoDB" id="10003330at2759"/>
<dbReference type="PAN-GO" id="Q9Y3M8">
    <property type="GO annotations" value="3 GO annotations based on evolutionary models"/>
</dbReference>
<dbReference type="PhylomeDB" id="Q9Y3M8"/>
<dbReference type="TreeFam" id="TF314044"/>
<dbReference type="PathwayCommons" id="Q9Y3M8"/>
<dbReference type="Reactome" id="R-HSA-8980692">
    <property type="pathway name" value="RHOA GTPase cycle"/>
</dbReference>
<dbReference type="Reactome" id="R-HSA-9013026">
    <property type="pathway name" value="RHOB GTPase cycle"/>
</dbReference>
<dbReference type="Reactome" id="R-HSA-9013106">
    <property type="pathway name" value="RHOC GTPase cycle"/>
</dbReference>
<dbReference type="Reactome" id="R-HSA-9013148">
    <property type="pathway name" value="CDC42 GTPase cycle"/>
</dbReference>
<dbReference type="SignaLink" id="Q9Y3M8"/>
<dbReference type="SIGNOR" id="Q9Y3M8"/>
<dbReference type="BioGRID-ORCS" id="90627">
    <property type="hits" value="11 hits in 1150 CRISPR screens"/>
</dbReference>
<dbReference type="ChiTaRS" id="STARD13">
    <property type="organism name" value="human"/>
</dbReference>
<dbReference type="EvolutionaryTrace" id="Q9Y3M8"/>
<dbReference type="GeneWiki" id="STARD13"/>
<dbReference type="GenomeRNAi" id="90627"/>
<dbReference type="Pharos" id="Q9Y3M8">
    <property type="development level" value="Tbio"/>
</dbReference>
<dbReference type="PRO" id="PR:Q9Y3M8"/>
<dbReference type="Proteomes" id="UP000005640">
    <property type="component" value="Chromosome 13"/>
</dbReference>
<dbReference type="RNAct" id="Q9Y3M8">
    <property type="molecule type" value="protein"/>
</dbReference>
<dbReference type="Bgee" id="ENSG00000133121">
    <property type="expression patterns" value="Expressed in sural nerve and 174 other cell types or tissues"/>
</dbReference>
<dbReference type="ExpressionAtlas" id="Q9Y3M8">
    <property type="expression patterns" value="baseline and differential"/>
</dbReference>
<dbReference type="GO" id="GO:0005829">
    <property type="term" value="C:cytosol"/>
    <property type="evidence" value="ECO:0000304"/>
    <property type="project" value="Reactome"/>
</dbReference>
<dbReference type="GO" id="GO:0005811">
    <property type="term" value="C:lipid droplet"/>
    <property type="evidence" value="ECO:0007669"/>
    <property type="project" value="UniProtKB-SubCell"/>
</dbReference>
<dbReference type="GO" id="GO:0031966">
    <property type="term" value="C:mitochondrial membrane"/>
    <property type="evidence" value="ECO:0007669"/>
    <property type="project" value="UniProtKB-SubCell"/>
</dbReference>
<dbReference type="GO" id="GO:0005096">
    <property type="term" value="F:GTPase activator activity"/>
    <property type="evidence" value="ECO:0000318"/>
    <property type="project" value="GO_Central"/>
</dbReference>
<dbReference type="GO" id="GO:0008289">
    <property type="term" value="F:lipid binding"/>
    <property type="evidence" value="ECO:0007669"/>
    <property type="project" value="InterPro"/>
</dbReference>
<dbReference type="GO" id="GO:0030036">
    <property type="term" value="P:actin cytoskeleton organization"/>
    <property type="evidence" value="ECO:0000318"/>
    <property type="project" value="GO_Central"/>
</dbReference>
<dbReference type="GO" id="GO:0043542">
    <property type="term" value="P:endothelial cell migration"/>
    <property type="evidence" value="ECO:0000315"/>
    <property type="project" value="MGI"/>
</dbReference>
<dbReference type="GO" id="GO:0097498">
    <property type="term" value="P:endothelial tube lumen extension"/>
    <property type="evidence" value="ECO:0000315"/>
    <property type="project" value="MGI"/>
</dbReference>
<dbReference type="GO" id="GO:0090051">
    <property type="term" value="P:negative regulation of cell migration involved in sprouting angiogenesis"/>
    <property type="evidence" value="ECO:0000315"/>
    <property type="project" value="MGI"/>
</dbReference>
<dbReference type="GO" id="GO:1903671">
    <property type="term" value="P:negative regulation of sprouting angiogenesis"/>
    <property type="evidence" value="ECO:0007669"/>
    <property type="project" value="Ensembl"/>
</dbReference>
<dbReference type="GO" id="GO:0035023">
    <property type="term" value="P:regulation of Rho protein signal transduction"/>
    <property type="evidence" value="ECO:0000318"/>
    <property type="project" value="GO_Central"/>
</dbReference>
<dbReference type="GO" id="GO:0051056">
    <property type="term" value="P:regulation of small GTPase mediated signal transduction"/>
    <property type="evidence" value="ECO:0000304"/>
    <property type="project" value="Reactome"/>
</dbReference>
<dbReference type="GO" id="GO:0007165">
    <property type="term" value="P:signal transduction"/>
    <property type="evidence" value="ECO:0007669"/>
    <property type="project" value="InterPro"/>
</dbReference>
<dbReference type="CDD" id="cd04375">
    <property type="entry name" value="RhoGAP_DLC1"/>
    <property type="match status" value="1"/>
</dbReference>
<dbReference type="CDD" id="cd09592">
    <property type="entry name" value="SAM_DLC2"/>
    <property type="match status" value="1"/>
</dbReference>
<dbReference type="CDD" id="cd08909">
    <property type="entry name" value="START_STARD13-like"/>
    <property type="match status" value="1"/>
</dbReference>
<dbReference type="FunFam" id="1.10.555.10:FF:000007">
    <property type="entry name" value="rho GTPase-activating protein 7 isoform X2"/>
    <property type="match status" value="1"/>
</dbReference>
<dbReference type="FunFam" id="3.30.530.20:FF:000009">
    <property type="entry name" value="StAR related lipid transfer domain containing 13"/>
    <property type="match status" value="1"/>
</dbReference>
<dbReference type="FunFam" id="1.10.287.2070:FF:000001">
    <property type="entry name" value="StAR-related lipid transfer domain-containing 13"/>
    <property type="match status" value="1"/>
</dbReference>
<dbReference type="Gene3D" id="1.10.287.2070">
    <property type="match status" value="1"/>
</dbReference>
<dbReference type="Gene3D" id="3.30.530.20">
    <property type="match status" value="1"/>
</dbReference>
<dbReference type="Gene3D" id="6.10.250.1870">
    <property type="match status" value="1"/>
</dbReference>
<dbReference type="Gene3D" id="1.10.555.10">
    <property type="entry name" value="Rho GTPase activation protein"/>
    <property type="match status" value="1"/>
</dbReference>
<dbReference type="InterPro" id="IPR008936">
    <property type="entry name" value="Rho_GTPase_activation_prot"/>
</dbReference>
<dbReference type="InterPro" id="IPR000198">
    <property type="entry name" value="RhoGAP_dom"/>
</dbReference>
<dbReference type="InterPro" id="IPR001660">
    <property type="entry name" value="SAM"/>
</dbReference>
<dbReference type="InterPro" id="IPR013761">
    <property type="entry name" value="SAM/pointed_sf"/>
</dbReference>
<dbReference type="InterPro" id="IPR023393">
    <property type="entry name" value="START-like_dom_sf"/>
</dbReference>
<dbReference type="InterPro" id="IPR002913">
    <property type="entry name" value="START_lipid-bd_dom"/>
</dbReference>
<dbReference type="PANTHER" id="PTHR12659">
    <property type="entry name" value="RHO-TYPE GTPASE ACTIVATING PROTEIN"/>
    <property type="match status" value="1"/>
</dbReference>
<dbReference type="PANTHER" id="PTHR12659:SF6">
    <property type="entry name" value="STAR-RELATED LIPID TRANSFER PROTEIN 13"/>
    <property type="match status" value="1"/>
</dbReference>
<dbReference type="Pfam" id="PF00620">
    <property type="entry name" value="RhoGAP"/>
    <property type="match status" value="1"/>
</dbReference>
<dbReference type="Pfam" id="PF07647">
    <property type="entry name" value="SAM_2"/>
    <property type="match status" value="1"/>
</dbReference>
<dbReference type="Pfam" id="PF01852">
    <property type="entry name" value="START"/>
    <property type="match status" value="1"/>
</dbReference>
<dbReference type="SMART" id="SM00324">
    <property type="entry name" value="RhoGAP"/>
    <property type="match status" value="1"/>
</dbReference>
<dbReference type="SMART" id="SM00234">
    <property type="entry name" value="START"/>
    <property type="match status" value="1"/>
</dbReference>
<dbReference type="SUPFAM" id="SSF55961">
    <property type="entry name" value="Bet v1-like"/>
    <property type="match status" value="1"/>
</dbReference>
<dbReference type="SUPFAM" id="SSF48350">
    <property type="entry name" value="GTPase activation domain, GAP"/>
    <property type="match status" value="1"/>
</dbReference>
<dbReference type="SUPFAM" id="SSF47769">
    <property type="entry name" value="SAM/Pointed domain"/>
    <property type="match status" value="1"/>
</dbReference>
<dbReference type="PROSITE" id="PS50238">
    <property type="entry name" value="RHOGAP"/>
    <property type="match status" value="1"/>
</dbReference>
<dbReference type="PROSITE" id="PS50848">
    <property type="entry name" value="START"/>
    <property type="match status" value="1"/>
</dbReference>
<organism>
    <name type="scientific">Homo sapiens</name>
    <name type="common">Human</name>
    <dbReference type="NCBI Taxonomy" id="9606"/>
    <lineage>
        <taxon>Eukaryota</taxon>
        <taxon>Metazoa</taxon>
        <taxon>Chordata</taxon>
        <taxon>Craniata</taxon>
        <taxon>Vertebrata</taxon>
        <taxon>Euteleostomi</taxon>
        <taxon>Mammalia</taxon>
        <taxon>Eutheria</taxon>
        <taxon>Euarchontoglires</taxon>
        <taxon>Primates</taxon>
        <taxon>Haplorrhini</taxon>
        <taxon>Catarrhini</taxon>
        <taxon>Hominidae</taxon>
        <taxon>Homo</taxon>
    </lineage>
</organism>
<comment type="function">
    <text evidence="6 7">GTPase-activating protein for RhoA, and perhaps for Cdc42. May be involved in regulation of cytoskeletal reorganization, cell proliferation and cell motility. Acts a tumor suppressor in hepatocellular carcinoma cells.</text>
</comment>
<comment type="subunit">
    <text evidence="6 8">Homodimer. Interacts with TAX1BP1.</text>
</comment>
<comment type="interaction">
    <interactant intactId="EBI-465487">
        <id>Q9Y3M8</id>
    </interactant>
    <interactant intactId="EBI-529518">
        <id>Q86VP1</id>
        <label>TAX1BP1</label>
    </interactant>
    <organismsDiffer>false</organismsDiffer>
    <experiments>2</experiments>
</comment>
<comment type="subcellular location">
    <subcellularLocation>
        <location>Cytoplasm</location>
    </subcellularLocation>
    <subcellularLocation>
        <location>Membrane</location>
        <topology>Peripheral membrane protein</topology>
        <orientation>Cytoplasmic side</orientation>
    </subcellularLocation>
    <subcellularLocation>
        <location>Mitochondrion membrane</location>
        <topology>Peripheral membrane protein</topology>
        <orientation>Cytoplasmic side</orientation>
    </subcellularLocation>
    <subcellularLocation>
        <location>Lipid droplet</location>
    </subcellularLocation>
</comment>
<comment type="alternative products">
    <event type="alternative splicing"/>
    <isoform>
        <id>Q9Y3M8-1</id>
        <name>1</name>
        <name>DLC2alpha</name>
        <sequence type="displayed"/>
    </isoform>
    <isoform>
        <id>Q9Y3M8-2</id>
        <name>2</name>
        <name>DLC2beta</name>
        <sequence type="described" ref="VSP_017354"/>
    </isoform>
    <isoform>
        <id>Q9Y3M8-3</id>
        <name>3</name>
        <name>DLC2gamma</name>
        <sequence type="described" ref="VSP_017353"/>
    </isoform>
    <isoform>
        <id>Q9Y3M8-4</id>
        <name>4</name>
        <sequence type="described" ref="VSP_017355"/>
    </isoform>
    <isoform>
        <id>Q9Y3M8-5</id>
        <name>5</name>
        <sequence type="described" ref="VSP_017354 VSP_017356 VSP_017357"/>
    </isoform>
</comment>
<comment type="tissue specificity">
    <text evidence="5 6">Ubiquitously expressed. Underexpressed in hepatocellular carcinoma cells and some breast cancer cell lines.</text>
</comment>
<comment type="online information" name="Atlas of Genetics and Cytogenetics in Oncology and Haematology">
    <link uri="https://atlasgeneticsoncology.org/gene/44051/STARD13"/>
</comment>
<evidence type="ECO:0000250" key="1">
    <source>
        <dbReference type="UniProtKB" id="Q923Q2"/>
    </source>
</evidence>
<evidence type="ECO:0000255" key="2">
    <source>
        <dbReference type="PROSITE-ProRule" id="PRU00172"/>
    </source>
</evidence>
<evidence type="ECO:0000255" key="3">
    <source>
        <dbReference type="PROSITE-ProRule" id="PRU00197"/>
    </source>
</evidence>
<evidence type="ECO:0000256" key="4">
    <source>
        <dbReference type="SAM" id="MobiDB-lite"/>
    </source>
</evidence>
<evidence type="ECO:0000269" key="5">
    <source>
    </source>
</evidence>
<evidence type="ECO:0000269" key="6">
    <source>
    </source>
</evidence>
<evidence type="ECO:0000269" key="7">
    <source>
    </source>
</evidence>
<evidence type="ECO:0000269" key="8">
    <source>
    </source>
</evidence>
<evidence type="ECO:0000303" key="9">
    <source>
    </source>
</evidence>
<evidence type="ECO:0000303" key="10">
    <source>
    </source>
</evidence>
<evidence type="ECO:0000303" key="11">
    <source>
    </source>
</evidence>
<evidence type="ECO:0000303" key="12">
    <source ref="4"/>
</evidence>
<evidence type="ECO:0000305" key="13"/>
<evidence type="ECO:0007744" key="14">
    <source>
    </source>
</evidence>
<evidence type="ECO:0007829" key="15">
    <source>
        <dbReference type="PDB" id="2H80"/>
    </source>
</evidence>
<evidence type="ECO:0007829" key="16">
    <source>
        <dbReference type="PDB" id="2JW2"/>
    </source>
</evidence>
<evidence type="ECO:0007829" key="17">
    <source>
        <dbReference type="PDB" id="2PSO"/>
    </source>
</evidence>
<accession>Q9Y3M8</accession>
<accession>A2A309</accession>
<accession>A2A310</accession>
<accession>Q5HYH1</accession>
<accession>Q5TAE3</accession>
<accession>Q6UN61</accession>
<accession>Q86TP6</accession>
<accession>Q86WQ3</accession>
<accession>Q86XT1</accession>
<sequence length="1113" mass="124967">MFSQVPRTPASGCYYLNSMTPEGQEMYLRFDQTTRRSPYRMSRILARHQLVTKIQQEIEAKEACDWLRAAGFPQYAQLYEDSQFPINIVAVKNDHDFLEKDLVEPLCRRLNTLNKCASMKLDVNFQRKKGDDSDEEDLCISNKWTFQRTSRRWSRVDDLYTLLPRGDRNGSPGGTGMRNTTSSESVLTDLSEPEVCSIHSESSGGSDSRSQPGQCCTDNPVMLDAPLVSSSLPQPPRDVLNHPFHPKNEKPTRARAKSFLKRMETLRGKGAHGRHKGSGRTGGLVISGPMLQQEPESFKAMQCIQIPNGDLQNSPPPACRKGLPCSGKSSGESSPSEHSSSGVSTPCLKERKCHEANKRGGMYLEDLDVLAGTALPDAGDQSRMHEFHSQENLVVHIPKDHKPGTFPKALSIESLSPTDSSNGVNWRTGSISLGREQVPGAREPRLMASCHRASRVSIYDNVPGSHLYASTGDLLDLEKDDLFPHLDDILQHVNGLQEVVDDWSKDVLPELQTHDTLVGEPGLSTFPSPNQITLDFEGNSVSEGRTTPSDVERDVTSLNESEPPGVRDRRDSGVGASLTRPNRRLRWNSFQLSHQPRPAPASPHISSQTASQLSLLQRFSLLRLTAIMEKHSMSNKHGWTWSVPKFMKRMKVPDYKDKAVFGVPLIVHVQRTGQPLPQSIQQALRYLRSNCLDQVGLFRKSGVKSRIHALRQMNENFPENVNYEDQSAYDVADMVKQFFRDLPEPLFTNKLSETFLHIYQYVSKEQRLQAVQAAILLLADENREVLQTLLCFLNDVVNLVEENQMTPMNLAVCLAPSLFHLNLLKKESSPRVIQKKYATGKPDQKDLNENLAAAQGLAHMIMECDRLFEVPHELVAQSRNSYVEAEIHVPTLEELGTQLEESGATFHTYLNHLIQGLQKEAKEKFKGWVTCSSTDNTDLAFKKVGDGNPLKLWKASVEVEAPPSVVLNRVLRERHLWDEDFVQWKVVETLDRQTEIYQYVLNSMAPHPSRDFVVLRTWKTDLPKGMCTLVSLSVEHEEAQLLGGVRAVVMDSQYLIEPCGSGKSRLTHICRIDLKGHSPEWYSKGFGHLCAAEVARIRNSFQPLIAEGPETKI</sequence>
<gene>
    <name type="primary">STARD13</name>
    <name type="synonym">DLC2</name>
    <name type="synonym">GT650</name>
</gene>
<reference key="1">
    <citation type="journal article" date="2003" name="J. Biol. Chem.">
        <title>Deleted in liver cancer (DLC) 2 encodes a RhoGAP protein with growth suppressor function and is underexpressed in hepatocellular carcinoma.</title>
        <authorList>
            <person name="Ching Y.-P."/>
            <person name="Wong C.-M."/>
            <person name="Chan S.-F."/>
            <person name="Leung T.H.-Y."/>
            <person name="Ng D.-C."/>
            <person name="Jin D.-Y."/>
            <person name="Ng I.O."/>
        </authorList>
    </citation>
    <scope>NUCLEOTIDE SEQUENCE [MRNA] (ISOFORM 1)</scope>
    <scope>TISSUE SPECIFICITY</scope>
    <scope>MUTAGENESIS OF ARG-699</scope>
</reference>
<reference key="2">
    <citation type="journal article" date="2004" name="Biochem. Biophys. Res. Commun.">
        <title>Chromosome 13q12 encoded Rho GTPase activating protein suppresses growth of breast carcinoma cells, and yeast two-hybrid screen shows its interaction with several proteins.</title>
        <authorList>
            <person name="Nagaraja G.M."/>
            <person name="Kandpal R.P."/>
        </authorList>
    </citation>
    <scope>NUCLEOTIDE SEQUENCE [MRNA] (ISOFORM 1)</scope>
    <scope>FUNCTION</scope>
    <scope>TISSUE SPECIFICITY</scope>
    <scope>INTERACTION WITH TAX1BP1</scope>
</reference>
<reference key="3">
    <citation type="journal article" date="2005" name="Proc. Natl. Acad. Sci. U.S.A.">
        <title>Deleted in liver cancer 2 (DLC2) suppresses cell transformation by means of inhibition of RhoA activity.</title>
        <authorList>
            <person name="Leung T.H.-Y."/>
            <person name="Ching Y.-P."/>
            <person name="Yam J.W.P."/>
            <person name="Wong C.-M."/>
            <person name="Yau T.-O."/>
            <person name="Jin D.-Y."/>
            <person name="Ng I.O."/>
        </authorList>
    </citation>
    <scope>NUCLEOTIDE SEQUENCE [MRNA] (ISOFORMS 1; 2 AND 3)</scope>
    <scope>FUNCTION</scope>
    <scope>SUBCELLULAR LOCATION</scope>
    <scope>MUTAGENESIS OF LYS-736 AND ARG-740</scope>
</reference>
<reference key="4">
    <citation type="submission" date="1999-05" db="EMBL/GenBank/DDBJ databases">
        <authorList>
            <person name="Rhodes S."/>
        </authorList>
    </citation>
    <scope>NUCLEOTIDE SEQUENCE [LARGE SCALE MRNA] (ISOFORM 3)</scope>
</reference>
<reference key="5">
    <citation type="journal article" date="2007" name="BMC Genomics">
        <title>The full-ORF clone resource of the German cDNA consortium.</title>
        <authorList>
            <person name="Bechtel S."/>
            <person name="Rosenfelder H."/>
            <person name="Duda A."/>
            <person name="Schmidt C.P."/>
            <person name="Ernst U."/>
            <person name="Wellenreuther R."/>
            <person name="Mehrle A."/>
            <person name="Schuster C."/>
            <person name="Bahr A."/>
            <person name="Bloecker H."/>
            <person name="Heubner D."/>
            <person name="Hoerlein A."/>
            <person name="Michel G."/>
            <person name="Wedler H."/>
            <person name="Koehrer K."/>
            <person name="Ottenwaelder B."/>
            <person name="Poustka A."/>
            <person name="Wiemann S."/>
            <person name="Schupp I."/>
        </authorList>
    </citation>
    <scope>NUCLEOTIDE SEQUENCE [LARGE SCALE MRNA] (ISOFORM 4)</scope>
    <source>
        <tissue>Uterus</tissue>
    </source>
</reference>
<reference key="6">
    <citation type="journal article" date="2004" name="Nature">
        <title>The DNA sequence and analysis of human chromosome 13.</title>
        <authorList>
            <person name="Dunham A."/>
            <person name="Matthews L.H."/>
            <person name="Burton J."/>
            <person name="Ashurst J.L."/>
            <person name="Howe K.L."/>
            <person name="Ashcroft K.J."/>
            <person name="Beare D.M."/>
            <person name="Burford D.C."/>
            <person name="Hunt S.E."/>
            <person name="Griffiths-Jones S."/>
            <person name="Jones M.C."/>
            <person name="Keenan S.J."/>
            <person name="Oliver K."/>
            <person name="Scott C.E."/>
            <person name="Ainscough R."/>
            <person name="Almeida J.P."/>
            <person name="Ambrose K.D."/>
            <person name="Andrews D.T."/>
            <person name="Ashwell R.I.S."/>
            <person name="Babbage A.K."/>
            <person name="Bagguley C.L."/>
            <person name="Bailey J."/>
            <person name="Bannerjee R."/>
            <person name="Barlow K.F."/>
            <person name="Bates K."/>
            <person name="Beasley H."/>
            <person name="Bird C.P."/>
            <person name="Bray-Allen S."/>
            <person name="Brown A.J."/>
            <person name="Brown J.Y."/>
            <person name="Burrill W."/>
            <person name="Carder C."/>
            <person name="Carter N.P."/>
            <person name="Chapman J.C."/>
            <person name="Clamp M.E."/>
            <person name="Clark S.Y."/>
            <person name="Clarke G."/>
            <person name="Clee C.M."/>
            <person name="Clegg S.C."/>
            <person name="Cobley V."/>
            <person name="Collins J.E."/>
            <person name="Corby N."/>
            <person name="Coville G.J."/>
            <person name="Deloukas P."/>
            <person name="Dhami P."/>
            <person name="Dunham I."/>
            <person name="Dunn M."/>
            <person name="Earthrowl M.E."/>
            <person name="Ellington A.G."/>
            <person name="Faulkner L."/>
            <person name="Frankish A.G."/>
            <person name="Frankland J."/>
            <person name="French L."/>
            <person name="Garner P."/>
            <person name="Garnett J."/>
            <person name="Gilbert J.G.R."/>
            <person name="Gilson C.J."/>
            <person name="Ghori J."/>
            <person name="Grafham D.V."/>
            <person name="Gribble S.M."/>
            <person name="Griffiths C."/>
            <person name="Hall R.E."/>
            <person name="Hammond S."/>
            <person name="Harley J.L."/>
            <person name="Hart E.A."/>
            <person name="Heath P.D."/>
            <person name="Howden P.J."/>
            <person name="Huckle E.J."/>
            <person name="Hunt P.J."/>
            <person name="Hunt A.R."/>
            <person name="Johnson C."/>
            <person name="Johnson D."/>
            <person name="Kay M."/>
            <person name="Kimberley A.M."/>
            <person name="King A."/>
            <person name="Laird G.K."/>
            <person name="Langford C.J."/>
            <person name="Lawlor S."/>
            <person name="Leongamornlert D.A."/>
            <person name="Lloyd D.M."/>
            <person name="Lloyd C."/>
            <person name="Loveland J.E."/>
            <person name="Lovell J."/>
            <person name="Martin S."/>
            <person name="Mashreghi-Mohammadi M."/>
            <person name="McLaren S.J."/>
            <person name="McMurray A."/>
            <person name="Milne S."/>
            <person name="Moore M.J.F."/>
            <person name="Nickerson T."/>
            <person name="Palmer S.A."/>
            <person name="Pearce A.V."/>
            <person name="Peck A.I."/>
            <person name="Pelan S."/>
            <person name="Phillimore B."/>
            <person name="Porter K.M."/>
            <person name="Rice C.M."/>
            <person name="Searle S."/>
            <person name="Sehra H.K."/>
            <person name="Shownkeen R."/>
            <person name="Skuce C.D."/>
            <person name="Smith M."/>
            <person name="Steward C.A."/>
            <person name="Sycamore N."/>
            <person name="Tester J."/>
            <person name="Thomas D.W."/>
            <person name="Tracey A."/>
            <person name="Tromans A."/>
            <person name="Tubby B."/>
            <person name="Wall M."/>
            <person name="Wallis J.M."/>
            <person name="West A.P."/>
            <person name="Whitehead S.L."/>
            <person name="Willey D.L."/>
            <person name="Wilming L."/>
            <person name="Wray P.W."/>
            <person name="Wright M.W."/>
            <person name="Young L."/>
            <person name="Coulson A."/>
            <person name="Durbin R.M."/>
            <person name="Hubbard T."/>
            <person name="Sulston J.E."/>
            <person name="Beck S."/>
            <person name="Bentley D.R."/>
            <person name="Rogers J."/>
            <person name="Ross M.T."/>
        </authorList>
    </citation>
    <scope>NUCLEOTIDE SEQUENCE [LARGE SCALE GENOMIC DNA]</scope>
</reference>
<reference key="7">
    <citation type="journal article" date="2004" name="Genome Res.">
        <title>The status, quality, and expansion of the NIH full-length cDNA project: the Mammalian Gene Collection (MGC).</title>
        <authorList>
            <consortium name="The MGC Project Team"/>
        </authorList>
    </citation>
    <scope>NUCLEOTIDE SEQUENCE [LARGE SCALE MRNA] (ISOFORM 5)</scope>
    <source>
        <tissue>Skin</tissue>
    </source>
</reference>
<reference key="8">
    <citation type="journal article" date="2006" name="FEBS Lett.">
        <title>Mitochondrial targeting of growth suppressor protein DLC2 through the START domain.</title>
        <authorList>
            <person name="Ng D.C.-H."/>
            <person name="Chan S.-F."/>
            <person name="Kok K.H."/>
            <person name="Yam J.W.P."/>
            <person name="Ching Y.-P."/>
            <person name="Ng I.O."/>
            <person name="Jin D.-Y."/>
        </authorList>
    </citation>
    <scope>SUBCELLULAR LOCATION</scope>
</reference>
<reference key="9">
    <citation type="journal article" date="2012" name="Proc. Natl. Acad. Sci. U.S.A.">
        <title>N-terminal acetylome analyses and functional insights of the N-terminal acetyltransferase NatB.</title>
        <authorList>
            <person name="Van Damme P."/>
            <person name="Lasa M."/>
            <person name="Polevoda B."/>
            <person name="Gazquez C."/>
            <person name="Elosegui-Artola A."/>
            <person name="Kim D.S."/>
            <person name="De Juan-Pardo E."/>
            <person name="Demeyer K."/>
            <person name="Hole K."/>
            <person name="Larrea E."/>
            <person name="Timmerman E."/>
            <person name="Prieto J."/>
            <person name="Arnesen T."/>
            <person name="Sherman F."/>
            <person name="Gevaert K."/>
            <person name="Aldabe R."/>
        </authorList>
    </citation>
    <scope>ACETYLATION [LARGE SCALE ANALYSIS] AT MET-1</scope>
    <scope>IDENTIFICATION BY MASS SPECTROMETRY [LARGE SCALE ANALYSIS]</scope>
</reference>
<reference key="10">
    <citation type="journal article" date="2007" name="Proteins">
        <title>Solution structures, dynamics, and lipid-binding of the sterile alpha-motif domain of the deleted in liver cancer 2.</title>
        <authorList>
            <person name="Li H."/>
            <person name="Fung K.-L."/>
            <person name="Jin D.-Y."/>
            <person name="Chung S.S.M."/>
            <person name="Ching Y.-P."/>
            <person name="Ng I.O."/>
            <person name="Sze K.-H."/>
            <person name="Ko B.C.B."/>
            <person name="Sun H."/>
        </authorList>
    </citation>
    <scope>STRUCTURE BY NMR OF 56-120</scope>
    <scope>SUBUNIT</scope>
    <scope>INTERACTION WITH MEMBRANE PHOSPHOLIPIDS</scope>
</reference>
<reference key="11">
    <citation type="submission" date="2007-05" db="PDB data bank">
        <title>The crystal structure of human STARD13 (DLC2) lipid transfer and protein localization domain.</title>
        <authorList>
            <consortium name="Structural genomics consortium (SGC)"/>
        </authorList>
    </citation>
    <scope>X-RAY CRYSTALLOGRAPHY (2.8 ANGSTROMS) OF 900-1113</scope>
</reference>
<name>STA13_HUMAN</name>